<protein>
    <recommendedName>
        <fullName>Ubiquitin carboxyl-terminal hydrolase 14</fullName>
        <ecNumber>3.4.19.12</ecNumber>
    </recommendedName>
    <alternativeName>
        <fullName>Deubiquitinating enzyme 14</fullName>
    </alternativeName>
    <alternativeName>
        <fullName>Ubiquitin thioesterase 14</fullName>
    </alternativeName>
    <alternativeName>
        <fullName>Ubiquitin-specific-processing protease 14</fullName>
    </alternativeName>
</protein>
<evidence type="ECO:0000250" key="1"/>
<evidence type="ECO:0000250" key="2">
    <source>
        <dbReference type="UniProtKB" id="P54578"/>
    </source>
</evidence>
<evidence type="ECO:0000250" key="3">
    <source>
        <dbReference type="UniProtKB" id="Q9JMA1"/>
    </source>
</evidence>
<evidence type="ECO:0000255" key="4">
    <source>
        <dbReference type="PROSITE-ProRule" id="PRU00214"/>
    </source>
</evidence>
<evidence type="ECO:0000255" key="5">
    <source>
        <dbReference type="PROSITE-ProRule" id="PRU10092"/>
    </source>
</evidence>
<evidence type="ECO:0000255" key="6">
    <source>
        <dbReference type="PROSITE-ProRule" id="PRU10093"/>
    </source>
</evidence>
<evidence type="ECO:0000305" key="7"/>
<evidence type="ECO:0000305" key="8">
    <source>
    </source>
</evidence>
<dbReference type="EC" id="3.4.19.12"/>
<dbReference type="EMBL" id="L37420">
    <property type="protein sequence ID" value="AAA96133.1"/>
    <property type="molecule type" value="mRNA"/>
</dbReference>
<dbReference type="PIR" id="S68430">
    <property type="entry name" value="S68430"/>
</dbReference>
<dbReference type="RefSeq" id="NP_001075726.1">
    <property type="nucleotide sequence ID" value="NM_001082257.1"/>
</dbReference>
<dbReference type="SMR" id="P40826"/>
<dbReference type="BioGRID" id="1172101">
    <property type="interactions" value="1"/>
</dbReference>
<dbReference type="FunCoup" id="P40826">
    <property type="interactions" value="2865"/>
</dbReference>
<dbReference type="STRING" id="9986.ENSOCUP00000048678"/>
<dbReference type="MEROPS" id="C19.015"/>
<dbReference type="PaxDb" id="9986-ENSOCUP00000015687"/>
<dbReference type="Ensembl" id="ENSOCUT00000029186.3">
    <property type="protein sequence ID" value="ENSOCUP00000015687.1"/>
    <property type="gene ID" value="ENSOCUG00000011595.4"/>
</dbReference>
<dbReference type="GeneID" id="100009078"/>
<dbReference type="KEGG" id="ocu:100009078"/>
<dbReference type="CTD" id="9097"/>
<dbReference type="eggNOG" id="KOG1872">
    <property type="taxonomic scope" value="Eukaryota"/>
</dbReference>
<dbReference type="GeneTree" id="ENSGT00390000009615"/>
<dbReference type="HOGENOM" id="CLU_017549_2_1_1"/>
<dbReference type="InParanoid" id="P40826"/>
<dbReference type="OMA" id="FKSDAEY"/>
<dbReference type="OrthoDB" id="333239at2759"/>
<dbReference type="TreeFam" id="TF314494"/>
<dbReference type="Proteomes" id="UP000001811">
    <property type="component" value="Chromosome 9"/>
</dbReference>
<dbReference type="Bgee" id="ENSOCUG00000011595">
    <property type="expression patterns" value="Expressed in blood and 16 other cell types or tissues"/>
</dbReference>
<dbReference type="GO" id="GO:0005737">
    <property type="term" value="C:cytoplasm"/>
    <property type="evidence" value="ECO:0007669"/>
    <property type="project" value="UniProtKB-SubCell"/>
</dbReference>
<dbReference type="GO" id="GO:0005886">
    <property type="term" value="C:plasma membrane"/>
    <property type="evidence" value="ECO:0007669"/>
    <property type="project" value="UniProtKB-SubCell"/>
</dbReference>
<dbReference type="GO" id="GO:0000502">
    <property type="term" value="C:proteasome complex"/>
    <property type="evidence" value="ECO:0007669"/>
    <property type="project" value="UniProtKB-KW"/>
</dbReference>
<dbReference type="GO" id="GO:0004843">
    <property type="term" value="F:cysteine-type deubiquitinase activity"/>
    <property type="evidence" value="ECO:0007669"/>
    <property type="project" value="UniProtKB-EC"/>
</dbReference>
<dbReference type="GO" id="GO:0070628">
    <property type="term" value="F:proteasome binding"/>
    <property type="evidence" value="ECO:0007669"/>
    <property type="project" value="TreeGrafter"/>
</dbReference>
<dbReference type="GO" id="GO:0045087">
    <property type="term" value="P:innate immune response"/>
    <property type="evidence" value="ECO:0007669"/>
    <property type="project" value="UniProtKB-KW"/>
</dbReference>
<dbReference type="GO" id="GO:0043161">
    <property type="term" value="P:proteasome-mediated ubiquitin-dependent protein catabolic process"/>
    <property type="evidence" value="ECO:0007669"/>
    <property type="project" value="InterPro"/>
</dbReference>
<dbReference type="GO" id="GO:0016579">
    <property type="term" value="P:protein deubiquitination"/>
    <property type="evidence" value="ECO:0007669"/>
    <property type="project" value="InterPro"/>
</dbReference>
<dbReference type="GO" id="GO:0061136">
    <property type="term" value="P:regulation of proteasomal protein catabolic process"/>
    <property type="evidence" value="ECO:0007669"/>
    <property type="project" value="TreeGrafter"/>
</dbReference>
<dbReference type="CDD" id="cd02657">
    <property type="entry name" value="Peptidase_C19A"/>
    <property type="match status" value="1"/>
</dbReference>
<dbReference type="CDD" id="cd16104">
    <property type="entry name" value="Ubl_USP14_like"/>
    <property type="match status" value="1"/>
</dbReference>
<dbReference type="FunFam" id="3.10.20.90:FF:000119">
    <property type="entry name" value="Ubiquitin carboxyl-terminal hydrolase 14"/>
    <property type="match status" value="1"/>
</dbReference>
<dbReference type="FunFam" id="3.90.70.10:FF:000032">
    <property type="entry name" value="Ubiquitin carboxyl-terminal hydrolase 14"/>
    <property type="match status" value="1"/>
</dbReference>
<dbReference type="Gene3D" id="3.90.70.10">
    <property type="entry name" value="Cysteine proteinases"/>
    <property type="match status" value="1"/>
</dbReference>
<dbReference type="Gene3D" id="3.10.20.90">
    <property type="entry name" value="Phosphatidylinositol 3-kinase Catalytic Subunit, Chain A, domain 1"/>
    <property type="match status" value="1"/>
</dbReference>
<dbReference type="InterPro" id="IPR038765">
    <property type="entry name" value="Papain-like_cys_pep_sf"/>
</dbReference>
<dbReference type="InterPro" id="IPR001394">
    <property type="entry name" value="Peptidase_C19_UCH"/>
</dbReference>
<dbReference type="InterPro" id="IPR000626">
    <property type="entry name" value="Ubiquitin-like_dom"/>
</dbReference>
<dbReference type="InterPro" id="IPR029071">
    <property type="entry name" value="Ubiquitin-like_domsf"/>
</dbReference>
<dbReference type="InterPro" id="IPR019954">
    <property type="entry name" value="Ubiquitin_CS"/>
</dbReference>
<dbReference type="InterPro" id="IPR044635">
    <property type="entry name" value="UBP14-like"/>
</dbReference>
<dbReference type="InterPro" id="IPR018200">
    <property type="entry name" value="USP_CS"/>
</dbReference>
<dbReference type="InterPro" id="IPR028889">
    <property type="entry name" value="USP_dom"/>
</dbReference>
<dbReference type="PANTHER" id="PTHR43982">
    <property type="entry name" value="UBIQUITIN CARBOXYL-TERMINAL HYDROLASE"/>
    <property type="match status" value="1"/>
</dbReference>
<dbReference type="PANTHER" id="PTHR43982:SF1">
    <property type="entry name" value="UBIQUITIN CARBOXYL-TERMINAL HYDROLASE 14"/>
    <property type="match status" value="1"/>
</dbReference>
<dbReference type="Pfam" id="PF00443">
    <property type="entry name" value="UCH"/>
    <property type="match status" value="1"/>
</dbReference>
<dbReference type="SMART" id="SM00213">
    <property type="entry name" value="UBQ"/>
    <property type="match status" value="1"/>
</dbReference>
<dbReference type="SUPFAM" id="SSF54001">
    <property type="entry name" value="Cysteine proteinases"/>
    <property type="match status" value="1"/>
</dbReference>
<dbReference type="SUPFAM" id="SSF54236">
    <property type="entry name" value="Ubiquitin-like"/>
    <property type="match status" value="1"/>
</dbReference>
<dbReference type="PROSITE" id="PS00299">
    <property type="entry name" value="UBIQUITIN_1"/>
    <property type="match status" value="1"/>
</dbReference>
<dbReference type="PROSITE" id="PS50053">
    <property type="entry name" value="UBIQUITIN_2"/>
    <property type="match status" value="1"/>
</dbReference>
<dbReference type="PROSITE" id="PS00972">
    <property type="entry name" value="USP_1"/>
    <property type="match status" value="1"/>
</dbReference>
<dbReference type="PROSITE" id="PS00973">
    <property type="entry name" value="USP_2"/>
    <property type="match status" value="1"/>
</dbReference>
<dbReference type="PROSITE" id="PS50235">
    <property type="entry name" value="USP_3"/>
    <property type="match status" value="1"/>
</dbReference>
<feature type="chain" id="PRO_0000080639" description="Ubiquitin carboxyl-terminal hydrolase 14">
    <location>
        <begin position="1"/>
        <end position="493"/>
    </location>
</feature>
<feature type="domain" description="Ubiquitin-like" evidence="4">
    <location>
        <begin position="4"/>
        <end position="80"/>
    </location>
</feature>
<feature type="domain" description="USP">
    <location>
        <begin position="105"/>
        <end position="482"/>
    </location>
</feature>
<feature type="active site" description="Nucleophile" evidence="5 6">
    <location>
        <position position="114"/>
    </location>
</feature>
<feature type="active site" description="Proton acceptor" evidence="5 6">
    <location>
        <position position="434"/>
    </location>
</feature>
<feature type="modified residue" description="Phosphothreonine" evidence="2">
    <location>
        <position position="52"/>
    </location>
</feature>
<feature type="modified residue" description="Phosphoserine" evidence="2">
    <location>
        <position position="143"/>
    </location>
</feature>
<feature type="modified residue" description="Phosphoserine" evidence="3">
    <location>
        <position position="148"/>
    </location>
</feature>
<feature type="modified residue" description="Phosphoserine" evidence="2">
    <location>
        <position position="236"/>
    </location>
</feature>
<feature type="modified residue" description="Phosphoserine" evidence="2">
    <location>
        <position position="301"/>
    </location>
</feature>
<feature type="modified residue" description="Phosphoserine" evidence="2">
    <location>
        <position position="431"/>
    </location>
</feature>
<feature type="modified residue" description="N6-acetyllysine" evidence="2">
    <location>
        <position position="448"/>
    </location>
</feature>
<organism>
    <name type="scientific">Oryctolagus cuniculus</name>
    <name type="common">Rabbit</name>
    <dbReference type="NCBI Taxonomy" id="9986"/>
    <lineage>
        <taxon>Eukaryota</taxon>
        <taxon>Metazoa</taxon>
        <taxon>Chordata</taxon>
        <taxon>Craniata</taxon>
        <taxon>Vertebrata</taxon>
        <taxon>Euteleostomi</taxon>
        <taxon>Mammalia</taxon>
        <taxon>Eutheria</taxon>
        <taxon>Euarchontoglires</taxon>
        <taxon>Glires</taxon>
        <taxon>Lagomorpha</taxon>
        <taxon>Leporidae</taxon>
        <taxon>Oryctolagus</taxon>
    </lineage>
</organism>
<keyword id="KW-0007">Acetylation</keyword>
<keyword id="KW-1003">Cell membrane</keyword>
<keyword id="KW-0963">Cytoplasm</keyword>
<keyword id="KW-0903">Direct protein sequencing</keyword>
<keyword id="KW-0378">Hydrolase</keyword>
<keyword id="KW-0391">Immunity</keyword>
<keyword id="KW-0399">Innate immunity</keyword>
<keyword id="KW-0472">Membrane</keyword>
<keyword id="KW-0597">Phosphoprotein</keyword>
<keyword id="KW-0645">Protease</keyword>
<keyword id="KW-0647">Proteasome</keyword>
<keyword id="KW-1185">Reference proteome</keyword>
<keyword id="KW-0788">Thiol protease</keyword>
<keyword id="KW-0833">Ubl conjugation pathway</keyword>
<comment type="function">
    <text evidence="2 3">Proteasome-associated deubiquitinase which releases ubiquitin from the proteasome targeted ubiquitinated proteins. Ensures the regeneration of ubiquitin at the proteasome. Is a reversibly associated subunit of the proteasome and a large fraction of proteasome-free protein exists within the cell. Required for the degradation of the chemokine receptor CXCR4 which is critical for CXCL12-induced cell chemotaxis. Also serves as a physiological inhibitor of endoplasmic reticulum-associated degradation (ERAD) under the non-stressed condition by inhibiting the degradation of unfolded endoplasmic reticulum proteins via interaction with ERN1 (By similarity). Indispensable for synaptic development and function at neuromuscular junctions (NMJs) (By similarity). Plays a role in the innate immune defense against viruses by stabilizing the viral DNA sensor CGAS and thus inhibiting its autophagic degradation (By similarity).</text>
</comment>
<comment type="catalytic activity">
    <reaction>
        <text>Thiol-dependent hydrolysis of ester, thioester, amide, peptide and isopeptide bonds formed by the C-terminal Gly of ubiquitin (a 76-residue protein attached to proteins as an intracellular targeting signal).</text>
        <dbReference type="EC" id="3.4.19.12"/>
    </reaction>
</comment>
<comment type="subunit">
    <text evidence="2">Homodimer (Potential). Associates with the 26S proteasome. Interacts with FANCC, CXCR4 and ERN1. Interacts with TRIM14; this interaction recruits USP14 to cleave ubiquitin chains of CGAS (By similarity).</text>
</comment>
<comment type="subcellular location">
    <subcellularLocation>
        <location evidence="1">Cytoplasm</location>
    </subcellularLocation>
    <subcellularLocation>
        <location evidence="1">Cell membrane</location>
        <topology evidence="1">Peripheral membrane protein</topology>
    </subcellularLocation>
</comment>
<comment type="similarity">
    <text evidence="7">Belongs to the peptidase C19 family. USP14/UBP6 subfamily.</text>
</comment>
<comment type="caution">
    <text evidence="8">Was originally thought to be a guanine tRNA-ribosyltransferase.</text>
</comment>
<gene>
    <name type="primary">USP14</name>
    <name type="synonym">TGT</name>
</gene>
<reference key="1">
    <citation type="journal article" date="1996" name="Arch. Biochem. Biophys.">
        <title>Cloning and characterization of cDNA encoding the rabbit tRNA-guanine transglycosylase 60-kilodalton subunit.</title>
        <authorList>
            <person name="Deshpande K.L."/>
            <person name="Seubert P.H."/>
            <person name="Tillman D.M."/>
            <person name="Farkas W.R."/>
            <person name="Katze J.R."/>
        </authorList>
    </citation>
    <scope>NUCLEOTIDE SEQUENCE [MRNA]</scope>
    <scope>PARTIAL PROTEIN SEQUENCE</scope>
    <source>
        <strain>New Zealand white</strain>
        <tissue>Liver</tissue>
    </source>
</reference>
<accession>P40826</accession>
<sequence length="493" mass="55922">MPLYSVTVKWGKEKFGGVELNTDEPPMVFKAQLFALTGVQPARQRVMVKGGTLKDDDWGNIKIKNGMTILMMGSADALPEEPSAKTVFVEDMTEEQLASAMELPCGLTNLGNTCYMNATVQCIRSVPELKDALKRYAGALRASGEMASAQYITAALRDLFDSMDKTSSSIPPIILLQFLHMAFPQFAEKGEQGQYLQQDANECWIQMMRVLQQKLEAIEDDSVKETDSSAAAVAPSKKKSLIDQFFGVEFETTMKCTESEEEEVTKGKENQLQLSCFINQEVKYLFTGLKLRLQEEITKQSPTLQRNALYIKSSKISRLPAYLTIQMVRFFYKEKESVNAKVLKDVKFPLMLDVYELCTPELQEKMVSFRSKFKDIEDKKVNQQPNASDKKSSPQKEVRYEPFSFADDIGSNNCGYYDLQAVLTHQGRSSSSGHYVSWVKRKHDEWIKFDDDKVSIVTPEDILRLSGGGDWHIAYVLLYGPRRVEIMEEENEQ</sequence>
<name>UBP14_RABIT</name>
<proteinExistence type="evidence at protein level"/>